<feature type="chain" id="PRO_0000297940" description="Ethylene-responsive transcription factor RAP2-11">
    <location>
        <begin position="1"/>
        <end position="253"/>
    </location>
</feature>
<feature type="DNA-binding region" description="AP2/ERF" evidence="2">
    <location>
        <begin position="21"/>
        <end position="78"/>
    </location>
</feature>
<organism>
    <name type="scientific">Arabidopsis thaliana</name>
    <name type="common">Mouse-ear cress</name>
    <dbReference type="NCBI Taxonomy" id="3702"/>
    <lineage>
        <taxon>Eukaryota</taxon>
        <taxon>Viridiplantae</taxon>
        <taxon>Streptophyta</taxon>
        <taxon>Embryophyta</taxon>
        <taxon>Tracheophyta</taxon>
        <taxon>Spermatophyta</taxon>
        <taxon>Magnoliopsida</taxon>
        <taxon>eudicotyledons</taxon>
        <taxon>Gunneridae</taxon>
        <taxon>Pentapetalae</taxon>
        <taxon>rosids</taxon>
        <taxon>malvids</taxon>
        <taxon>Brassicales</taxon>
        <taxon>Brassicaceae</taxon>
        <taxon>Camelineae</taxon>
        <taxon>Arabidopsis</taxon>
    </lineage>
</organism>
<proteinExistence type="evidence at transcript level"/>
<evidence type="ECO:0000250" key="1"/>
<evidence type="ECO:0000255" key="2">
    <source>
        <dbReference type="PROSITE-ProRule" id="PRU00366"/>
    </source>
</evidence>
<evidence type="ECO:0000305" key="3"/>
<protein>
    <recommendedName>
        <fullName>Ethylene-responsive transcription factor RAP2-11</fullName>
    </recommendedName>
    <alternativeName>
        <fullName>Protein RELATED TO APETALA2 11</fullName>
    </alternativeName>
</protein>
<keyword id="KW-0010">Activator</keyword>
<keyword id="KW-0238">DNA-binding</keyword>
<keyword id="KW-0936">Ethylene signaling pathway</keyword>
<keyword id="KW-0539">Nucleus</keyword>
<keyword id="KW-1185">Reference proteome</keyword>
<keyword id="KW-0804">Transcription</keyword>
<keyword id="KW-0805">Transcription regulation</keyword>
<name>RA211_ARATH</name>
<comment type="function">
    <text evidence="1">Probably acts as a transcriptional activator. Binds to the GCC-box pathogenesis-related promoter element. May be involved in the regulation of gene expression by stress factors and by components of stress signal transduction pathways (By similarity).</text>
</comment>
<comment type="subcellular location">
    <subcellularLocation>
        <location evidence="3">Nucleus</location>
    </subcellularLocation>
</comment>
<comment type="similarity">
    <text evidence="3">Belongs to the AP2/ERF transcription factor family. ERF subfamily.</text>
</comment>
<comment type="sequence caution" evidence="3">
    <conflict type="erroneous initiation">
        <sequence resource="EMBL-CDS" id="AAC49777"/>
    </conflict>
</comment>
<dbReference type="EMBL" id="AF003104">
    <property type="protein sequence ID" value="AAC49777.1"/>
    <property type="status" value="ALT_INIT"/>
    <property type="molecule type" value="mRNA"/>
</dbReference>
<dbReference type="EMBL" id="AY560854">
    <property type="protein sequence ID" value="AAT44921.1"/>
    <property type="molecule type" value="mRNA"/>
</dbReference>
<dbReference type="EMBL" id="AF296838">
    <property type="status" value="NOT_ANNOTATED_CDS"/>
    <property type="molecule type" value="Genomic_DNA"/>
</dbReference>
<dbReference type="EMBL" id="CP002688">
    <property type="protein sequence ID" value="AED92749.1"/>
    <property type="molecule type" value="Genomic_DNA"/>
</dbReference>
<dbReference type="RefSeq" id="NP_197480.1">
    <property type="nucleotide sequence ID" value="NM_121984.2"/>
</dbReference>
<dbReference type="SMR" id="Q6J9S1"/>
<dbReference type="BioGRID" id="17375">
    <property type="interactions" value="5"/>
</dbReference>
<dbReference type="FunCoup" id="Q6J9S1">
    <property type="interactions" value="28"/>
</dbReference>
<dbReference type="STRING" id="3702.Q6J9S1"/>
<dbReference type="PaxDb" id="3702-AT5G19790.1"/>
<dbReference type="EnsemblPlants" id="AT5G19790.1">
    <property type="protein sequence ID" value="AT5G19790.1"/>
    <property type="gene ID" value="AT5G19790"/>
</dbReference>
<dbReference type="GeneID" id="832099"/>
<dbReference type="Gramene" id="AT5G19790.1">
    <property type="protein sequence ID" value="AT5G19790.1"/>
    <property type="gene ID" value="AT5G19790"/>
</dbReference>
<dbReference type="KEGG" id="ath:AT5G19790"/>
<dbReference type="Araport" id="AT5G19790"/>
<dbReference type="TAIR" id="AT5G19790">
    <property type="gene designation" value="RAP2.11"/>
</dbReference>
<dbReference type="eggNOG" id="ENOG502RB9M">
    <property type="taxonomic scope" value="Eukaryota"/>
</dbReference>
<dbReference type="HOGENOM" id="CLU_056266_0_0_1"/>
<dbReference type="InParanoid" id="Q6J9S1"/>
<dbReference type="OMA" id="DNMNAEY"/>
<dbReference type="OrthoDB" id="773121at2759"/>
<dbReference type="PhylomeDB" id="Q6J9S1"/>
<dbReference type="PRO" id="PR:Q6J9S1"/>
<dbReference type="Proteomes" id="UP000006548">
    <property type="component" value="Chromosome 5"/>
</dbReference>
<dbReference type="ExpressionAtlas" id="Q6J9S1">
    <property type="expression patterns" value="baseline and differential"/>
</dbReference>
<dbReference type="GO" id="GO:0005634">
    <property type="term" value="C:nucleus"/>
    <property type="evidence" value="ECO:0000314"/>
    <property type="project" value="TAIR"/>
</dbReference>
<dbReference type="GO" id="GO:0003700">
    <property type="term" value="F:DNA-binding transcription factor activity"/>
    <property type="evidence" value="ECO:0000314"/>
    <property type="project" value="TAIR"/>
</dbReference>
<dbReference type="GO" id="GO:0043565">
    <property type="term" value="F:sequence-specific DNA binding"/>
    <property type="evidence" value="ECO:0000314"/>
    <property type="project" value="TAIR"/>
</dbReference>
<dbReference type="GO" id="GO:0035865">
    <property type="term" value="P:cellular response to potassium ion"/>
    <property type="evidence" value="ECO:0000270"/>
    <property type="project" value="TAIR"/>
</dbReference>
<dbReference type="GO" id="GO:0009873">
    <property type="term" value="P:ethylene-activated signaling pathway"/>
    <property type="evidence" value="ECO:0007669"/>
    <property type="project" value="UniProtKB-KW"/>
</dbReference>
<dbReference type="GO" id="GO:0048528">
    <property type="term" value="P:post-embryonic root development"/>
    <property type="evidence" value="ECO:0000315"/>
    <property type="project" value="TAIR"/>
</dbReference>
<dbReference type="GO" id="GO:0009723">
    <property type="term" value="P:response to ethylene"/>
    <property type="evidence" value="ECO:0000270"/>
    <property type="project" value="TAIR"/>
</dbReference>
<dbReference type="GO" id="GO:0000302">
    <property type="term" value="P:response to reactive oxygen species"/>
    <property type="evidence" value="ECO:0000270"/>
    <property type="project" value="TAIR"/>
</dbReference>
<dbReference type="CDD" id="cd00018">
    <property type="entry name" value="AP2"/>
    <property type="match status" value="1"/>
</dbReference>
<dbReference type="FunFam" id="3.30.730.10:FF:000005">
    <property type="entry name" value="ethylene-responsive transcription factor RAP2-11"/>
    <property type="match status" value="1"/>
</dbReference>
<dbReference type="Gene3D" id="3.30.730.10">
    <property type="entry name" value="AP2/ERF domain"/>
    <property type="match status" value="1"/>
</dbReference>
<dbReference type="InterPro" id="IPR001471">
    <property type="entry name" value="AP2/ERF_dom"/>
</dbReference>
<dbReference type="InterPro" id="IPR036955">
    <property type="entry name" value="AP2/ERF_dom_sf"/>
</dbReference>
<dbReference type="InterPro" id="IPR050913">
    <property type="entry name" value="AP2/ERF_ERF_subfamily"/>
</dbReference>
<dbReference type="InterPro" id="IPR016177">
    <property type="entry name" value="DNA-bd_dom_sf"/>
</dbReference>
<dbReference type="PANTHER" id="PTHR31194:SF90">
    <property type="entry name" value="ETHYLENE-RESPONSIVE TRANSCRIPTION FACTOR RAP2-11"/>
    <property type="match status" value="1"/>
</dbReference>
<dbReference type="PANTHER" id="PTHR31194">
    <property type="entry name" value="SHN SHINE , DNA BINDING / TRANSCRIPTION FACTOR"/>
    <property type="match status" value="1"/>
</dbReference>
<dbReference type="Pfam" id="PF00847">
    <property type="entry name" value="AP2"/>
    <property type="match status" value="1"/>
</dbReference>
<dbReference type="PRINTS" id="PR00367">
    <property type="entry name" value="ETHRSPELEMNT"/>
</dbReference>
<dbReference type="SMART" id="SM00380">
    <property type="entry name" value="AP2"/>
    <property type="match status" value="1"/>
</dbReference>
<dbReference type="SUPFAM" id="SSF54171">
    <property type="entry name" value="DNA-binding domain"/>
    <property type="match status" value="1"/>
</dbReference>
<dbReference type="PROSITE" id="PS51032">
    <property type="entry name" value="AP2_ERF"/>
    <property type="match status" value="1"/>
</dbReference>
<reference key="1">
    <citation type="journal article" date="1997" name="Proc. Natl. Acad. Sci. U.S.A.">
        <title>The AP2 domain of APETALA2 defines a large new family of DNA binding proteins in Arabidopsis.</title>
        <authorList>
            <person name="Okamuro J.K."/>
            <person name="Caster B."/>
            <person name="Villarroel R."/>
            <person name="Van Montagu M."/>
            <person name="Jofuku K.D."/>
        </authorList>
    </citation>
    <scope>NUCLEOTIDE SEQUENCE [MRNA]</scope>
</reference>
<reference key="2">
    <citation type="submission" date="2004-02" db="EMBL/GenBank/DDBJ databases">
        <title>Molecular cloning, expression, phylogenetic and functional characterization of the Arabidopsis AP2/EREBP transcription factor family.</title>
        <authorList>
            <person name="Pan Y."/>
            <person name="Gong W."/>
            <person name="Liu D."/>
            <person name="Fu Q."/>
            <person name="Mei W.-Q."/>
            <person name="Song W.-Q."/>
            <person name="Ma L.-G."/>
            <person name="Luo J.-C."/>
            <person name="Deng X.-W."/>
            <person name="Zhu Y.-X."/>
        </authorList>
    </citation>
    <scope>NUCLEOTIDE SEQUENCE [MRNA]</scope>
</reference>
<reference key="3">
    <citation type="journal article" date="2000" name="Nature">
        <title>Sequence and analysis of chromosome 5 of the plant Arabidopsis thaliana.</title>
        <authorList>
            <person name="Tabata S."/>
            <person name="Kaneko T."/>
            <person name="Nakamura Y."/>
            <person name="Kotani H."/>
            <person name="Kato T."/>
            <person name="Asamizu E."/>
            <person name="Miyajima N."/>
            <person name="Sasamoto S."/>
            <person name="Kimura T."/>
            <person name="Hosouchi T."/>
            <person name="Kawashima K."/>
            <person name="Kohara M."/>
            <person name="Matsumoto M."/>
            <person name="Matsuno A."/>
            <person name="Muraki A."/>
            <person name="Nakayama S."/>
            <person name="Nakazaki N."/>
            <person name="Naruo K."/>
            <person name="Okumura S."/>
            <person name="Shinpo S."/>
            <person name="Takeuchi C."/>
            <person name="Wada T."/>
            <person name="Watanabe A."/>
            <person name="Yamada M."/>
            <person name="Yasuda M."/>
            <person name="Sato S."/>
            <person name="de la Bastide M."/>
            <person name="Huang E."/>
            <person name="Spiegel L."/>
            <person name="Gnoj L."/>
            <person name="O'Shaughnessy A."/>
            <person name="Preston R."/>
            <person name="Habermann K."/>
            <person name="Murray J."/>
            <person name="Johnson D."/>
            <person name="Rohlfing T."/>
            <person name="Nelson J."/>
            <person name="Stoneking T."/>
            <person name="Pepin K."/>
            <person name="Spieth J."/>
            <person name="Sekhon M."/>
            <person name="Armstrong J."/>
            <person name="Becker M."/>
            <person name="Belter E."/>
            <person name="Cordum H."/>
            <person name="Cordes M."/>
            <person name="Courtney L."/>
            <person name="Courtney W."/>
            <person name="Dante M."/>
            <person name="Du H."/>
            <person name="Edwards J."/>
            <person name="Fryman J."/>
            <person name="Haakensen B."/>
            <person name="Lamar E."/>
            <person name="Latreille P."/>
            <person name="Leonard S."/>
            <person name="Meyer R."/>
            <person name="Mulvaney E."/>
            <person name="Ozersky P."/>
            <person name="Riley A."/>
            <person name="Strowmatt C."/>
            <person name="Wagner-McPherson C."/>
            <person name="Wollam A."/>
            <person name="Yoakum M."/>
            <person name="Bell M."/>
            <person name="Dedhia N."/>
            <person name="Parnell L."/>
            <person name="Shah R."/>
            <person name="Rodriguez M."/>
            <person name="Hoon See L."/>
            <person name="Vil D."/>
            <person name="Baker J."/>
            <person name="Kirchoff K."/>
            <person name="Toth K."/>
            <person name="King L."/>
            <person name="Bahret A."/>
            <person name="Miller B."/>
            <person name="Marra M.A."/>
            <person name="Martienssen R."/>
            <person name="McCombie W.R."/>
            <person name="Wilson R.K."/>
            <person name="Murphy G."/>
            <person name="Bancroft I."/>
            <person name="Volckaert G."/>
            <person name="Wambutt R."/>
            <person name="Duesterhoeft A."/>
            <person name="Stiekema W."/>
            <person name="Pohl T."/>
            <person name="Entian K.-D."/>
            <person name="Terryn N."/>
            <person name="Hartley N."/>
            <person name="Bent E."/>
            <person name="Johnson S."/>
            <person name="Langham S.-A."/>
            <person name="McCullagh B."/>
            <person name="Robben J."/>
            <person name="Grymonprez B."/>
            <person name="Zimmermann W."/>
            <person name="Ramsperger U."/>
            <person name="Wedler H."/>
            <person name="Balke K."/>
            <person name="Wedler E."/>
            <person name="Peters S."/>
            <person name="van Staveren M."/>
            <person name="Dirkse W."/>
            <person name="Mooijman P."/>
            <person name="Klein Lankhorst R."/>
            <person name="Weitzenegger T."/>
            <person name="Bothe G."/>
            <person name="Rose M."/>
            <person name="Hauf J."/>
            <person name="Berneiser S."/>
            <person name="Hempel S."/>
            <person name="Feldpausch M."/>
            <person name="Lamberth S."/>
            <person name="Villarroel R."/>
            <person name="Gielen J."/>
            <person name="Ardiles W."/>
            <person name="Bents O."/>
            <person name="Lemcke K."/>
            <person name="Kolesov G."/>
            <person name="Mayer K.F.X."/>
            <person name="Rudd S."/>
            <person name="Schoof H."/>
            <person name="Schueller C."/>
            <person name="Zaccaria P."/>
            <person name="Mewes H.-W."/>
            <person name="Bevan M."/>
            <person name="Fransz P.F."/>
        </authorList>
    </citation>
    <scope>NUCLEOTIDE SEQUENCE [LARGE SCALE GENOMIC DNA]</scope>
    <source>
        <strain>cv. Columbia</strain>
    </source>
</reference>
<reference key="4">
    <citation type="journal article" date="2017" name="Plant J.">
        <title>Araport11: a complete reannotation of the Arabidopsis thaliana reference genome.</title>
        <authorList>
            <person name="Cheng C.Y."/>
            <person name="Krishnakumar V."/>
            <person name="Chan A.P."/>
            <person name="Thibaud-Nissen F."/>
            <person name="Schobel S."/>
            <person name="Town C.D."/>
        </authorList>
    </citation>
    <scope>GENOME REANNOTATION</scope>
    <source>
        <strain>cv. Columbia</strain>
    </source>
</reference>
<reference key="5">
    <citation type="journal article" date="2006" name="Plant Physiol.">
        <title>Genome-wide analysis of the ERF gene family in Arabidopsis and rice.</title>
        <authorList>
            <person name="Nakano T."/>
            <person name="Suzuki K."/>
            <person name="Fujimura T."/>
            <person name="Shinshi H."/>
        </authorList>
    </citation>
    <scope>GENE FAMILY</scope>
    <scope>NOMENCLATURE</scope>
</reference>
<accession>Q6J9S1</accession>
<accession>O23112</accession>
<gene>
    <name type="primary">RAP2-11</name>
    <name type="synonym">ERF002</name>
    <name type="ordered locus">At5g19790</name>
    <name type="ORF">T29J13.210</name>
</gene>
<sequence>MEHQTTPKQKTKEKSKGNKTKFVGVRQRPSGKWVAEIKDTTQKIRMWLGTFETAEEAARAYDEAACLLRGSNTRTNFANHFPNNSQLSLKIRNLLHQKQSMKQQQQQQHKPVSSLTDCNINYISTATSLTTTTTTTTTTAIPLNNVYRPDSSVIGQPETEGLQLPYSWPLVSGFNHQIPLAQAGGETHGHLNDHYSTDQHLGLAEIERQISASLYAMNGANSYYDNMNAEYAIFDPTDPIWDLPSLSQLFCPT</sequence>